<proteinExistence type="uncertain"/>
<name>H1AS1_HUMAN</name>
<reference key="1">
    <citation type="journal article" date="2006" name="Nature">
        <title>The DNA sequence, annotation and analysis of human chromosome 3.</title>
        <authorList>
            <person name="Muzny D.M."/>
            <person name="Scherer S.E."/>
            <person name="Kaul R."/>
            <person name="Wang J."/>
            <person name="Yu J."/>
            <person name="Sudbrak R."/>
            <person name="Buhay C.J."/>
            <person name="Chen R."/>
            <person name="Cree A."/>
            <person name="Ding Y."/>
            <person name="Dugan-Rocha S."/>
            <person name="Gill R."/>
            <person name="Gunaratne P."/>
            <person name="Harris R.A."/>
            <person name="Hawes A.C."/>
            <person name="Hernandez J."/>
            <person name="Hodgson A.V."/>
            <person name="Hume J."/>
            <person name="Jackson A."/>
            <person name="Khan Z.M."/>
            <person name="Kovar-Smith C."/>
            <person name="Lewis L.R."/>
            <person name="Lozado R.J."/>
            <person name="Metzker M.L."/>
            <person name="Milosavljevic A."/>
            <person name="Miner G.R."/>
            <person name="Morgan M.B."/>
            <person name="Nazareth L.V."/>
            <person name="Scott G."/>
            <person name="Sodergren E."/>
            <person name="Song X.-Z."/>
            <person name="Steffen D."/>
            <person name="Wei S."/>
            <person name="Wheeler D.A."/>
            <person name="Wright M.W."/>
            <person name="Worley K.C."/>
            <person name="Yuan Y."/>
            <person name="Zhang Z."/>
            <person name="Adams C.Q."/>
            <person name="Ansari-Lari M.A."/>
            <person name="Ayele M."/>
            <person name="Brown M.J."/>
            <person name="Chen G."/>
            <person name="Chen Z."/>
            <person name="Clendenning J."/>
            <person name="Clerc-Blankenburg K.P."/>
            <person name="Chen R."/>
            <person name="Chen Z."/>
            <person name="Davis C."/>
            <person name="Delgado O."/>
            <person name="Dinh H.H."/>
            <person name="Dong W."/>
            <person name="Draper H."/>
            <person name="Ernst S."/>
            <person name="Fu G."/>
            <person name="Gonzalez-Garay M.L."/>
            <person name="Garcia D.K."/>
            <person name="Gillett W."/>
            <person name="Gu J."/>
            <person name="Hao B."/>
            <person name="Haugen E."/>
            <person name="Havlak P."/>
            <person name="He X."/>
            <person name="Hennig S."/>
            <person name="Hu S."/>
            <person name="Huang W."/>
            <person name="Jackson L.R."/>
            <person name="Jacob L.S."/>
            <person name="Kelly S.H."/>
            <person name="Kube M."/>
            <person name="Levy R."/>
            <person name="Li Z."/>
            <person name="Liu B."/>
            <person name="Liu J."/>
            <person name="Liu W."/>
            <person name="Lu J."/>
            <person name="Maheshwari M."/>
            <person name="Nguyen B.-V."/>
            <person name="Okwuonu G.O."/>
            <person name="Palmeiri A."/>
            <person name="Pasternak S."/>
            <person name="Perez L.M."/>
            <person name="Phelps K.A."/>
            <person name="Plopper F.J."/>
            <person name="Qiang B."/>
            <person name="Raymond C."/>
            <person name="Rodriguez R."/>
            <person name="Saenphimmachak C."/>
            <person name="Santibanez J."/>
            <person name="Shen H."/>
            <person name="Shen Y."/>
            <person name="Subramanian S."/>
            <person name="Tabor P.E."/>
            <person name="Verduzco D."/>
            <person name="Waldron L."/>
            <person name="Wang J."/>
            <person name="Wang J."/>
            <person name="Wang Q."/>
            <person name="Williams G.A."/>
            <person name="Wong G.K.-S."/>
            <person name="Yao Z."/>
            <person name="Zhang J."/>
            <person name="Zhang X."/>
            <person name="Zhao G."/>
            <person name="Zhou J."/>
            <person name="Zhou Y."/>
            <person name="Nelson D."/>
            <person name="Lehrach H."/>
            <person name="Reinhardt R."/>
            <person name="Naylor S.L."/>
            <person name="Yang H."/>
            <person name="Olson M."/>
            <person name="Weinstock G."/>
            <person name="Gibbs R.A."/>
        </authorList>
    </citation>
    <scope>NUCLEOTIDE SEQUENCE [LARGE SCALE GENOMIC DNA]</scope>
</reference>
<reference key="2">
    <citation type="journal article" date="2004" name="Genome Res.">
        <title>The status, quality, and expansion of the NIH full-length cDNA project: the Mammalian Gene Collection (MGC).</title>
        <authorList>
            <consortium name="The MGC Project Team"/>
        </authorList>
    </citation>
    <scope>NUCLEOTIDE SEQUENCE [LARGE SCALE MRNA]</scope>
</reference>
<protein>
    <recommendedName>
        <fullName>Putative uncharacterized protein H1-10-AS1</fullName>
    </recommendedName>
    <alternativeName>
        <fullName evidence="3">H1-10 antisense RNA 1</fullName>
    </alternativeName>
    <alternativeName>
        <fullName>H1FX antisense RNA 1</fullName>
    </alternativeName>
</protein>
<organism>
    <name type="scientific">Homo sapiens</name>
    <name type="common">Human</name>
    <dbReference type="NCBI Taxonomy" id="9606"/>
    <lineage>
        <taxon>Eukaryota</taxon>
        <taxon>Metazoa</taxon>
        <taxon>Chordata</taxon>
        <taxon>Craniata</taxon>
        <taxon>Vertebrata</taxon>
        <taxon>Euteleostomi</taxon>
        <taxon>Mammalia</taxon>
        <taxon>Eutheria</taxon>
        <taxon>Euarchontoglires</taxon>
        <taxon>Primates</taxon>
        <taxon>Haplorrhini</taxon>
        <taxon>Catarrhini</taxon>
        <taxon>Hominidae</taxon>
        <taxon>Homo</taxon>
    </lineage>
</organism>
<keyword id="KW-1185">Reference proteome</keyword>
<gene>
    <name evidence="3" type="primary">H1-10-AS1</name>
    <name type="synonym">C3orf47</name>
    <name type="synonym">H1FX-AS1</name>
</gene>
<sequence length="97" mass="11005">MGWEQETQKSRPWNQVEGRQPGHDPEQDTCSTSPFAMSKSSLRPPKKLMPCASCTAAEPDGFPWLCYSHSWKCCLTESSGHPGRMDVVYPLLYRWGN</sequence>
<accession>Q4G0G2</accession>
<comment type="caution">
    <text evidence="2">Product of a dubious CDS prediction. May be a non-coding RNA.</text>
</comment>
<evidence type="ECO:0000256" key="1">
    <source>
        <dbReference type="SAM" id="MobiDB-lite"/>
    </source>
</evidence>
<evidence type="ECO:0000305" key="2"/>
<evidence type="ECO:0000312" key="3">
    <source>
        <dbReference type="HGNC" id="HGNC:27953"/>
    </source>
</evidence>
<dbReference type="EMBL" id="AC137695">
    <property type="status" value="NOT_ANNOTATED_CDS"/>
    <property type="molecule type" value="Genomic_DNA"/>
</dbReference>
<dbReference type="EMBL" id="BC093941">
    <property type="status" value="NOT_ANNOTATED_CDS"/>
    <property type="molecule type" value="mRNA"/>
</dbReference>
<dbReference type="IntAct" id="Q4G0G2">
    <property type="interactions" value="1"/>
</dbReference>
<dbReference type="BioMuta" id="HGNC:27953"/>
<dbReference type="AGR" id="HGNC:27953"/>
<dbReference type="GeneCards" id="H1-10-AS1"/>
<dbReference type="HGNC" id="HGNC:27953">
    <property type="gene designation" value="H1-10-AS1"/>
</dbReference>
<dbReference type="neXtProt" id="NX_Q4G0G2"/>
<dbReference type="InParanoid" id="Q4G0G2"/>
<dbReference type="PAN-GO" id="Q4G0G2">
    <property type="GO annotations" value="0 GO annotations based on evolutionary models"/>
</dbReference>
<dbReference type="PathwayCommons" id="Q4G0G2"/>
<dbReference type="SignaLink" id="Q4G0G2"/>
<dbReference type="ChiTaRS" id="H1FX-AS1">
    <property type="organism name" value="human"/>
</dbReference>
<dbReference type="Pharos" id="Q4G0G2">
    <property type="development level" value="Tdark"/>
</dbReference>
<dbReference type="Proteomes" id="UP000005640">
    <property type="component" value="Unplaced"/>
</dbReference>
<dbReference type="RNAct" id="Q4G0G2">
    <property type="molecule type" value="protein"/>
</dbReference>
<feature type="chain" id="PRO_0000263673" description="Putative uncharacterized protein H1-10-AS1">
    <location>
        <begin position="1"/>
        <end position="97"/>
    </location>
</feature>
<feature type="region of interest" description="Disordered" evidence="1">
    <location>
        <begin position="1"/>
        <end position="45"/>
    </location>
</feature>
<feature type="compositionally biased region" description="Polar residues" evidence="1">
    <location>
        <begin position="28"/>
        <end position="41"/>
    </location>
</feature>